<protein>
    <recommendedName>
        <fullName evidence="2">Heat shock cognate 71 kDa protein</fullName>
        <ecNumber evidence="2">3.6.4.10</ecNumber>
    </recommendedName>
    <alternativeName>
        <fullName>Heat shock 70 kDa protein 8</fullName>
    </alternativeName>
    <alternativeName>
        <fullName>Intracellular vitamin D-binding protein 1</fullName>
    </alternativeName>
</protein>
<organism>
    <name type="scientific">Saguinus oedipus</name>
    <name type="common">Cotton-top tamarin</name>
    <dbReference type="NCBI Taxonomy" id="9490"/>
    <lineage>
        <taxon>Eukaryota</taxon>
        <taxon>Metazoa</taxon>
        <taxon>Chordata</taxon>
        <taxon>Craniata</taxon>
        <taxon>Vertebrata</taxon>
        <taxon>Euteleostomi</taxon>
        <taxon>Mammalia</taxon>
        <taxon>Eutheria</taxon>
        <taxon>Euarchontoglires</taxon>
        <taxon>Primates</taxon>
        <taxon>Haplorrhini</taxon>
        <taxon>Platyrrhini</taxon>
        <taxon>Cebidae</taxon>
        <taxon>Callitrichinae</taxon>
        <taxon>Saguinus</taxon>
    </lineage>
</organism>
<accession>Q71U34</accession>
<keyword id="KW-0007">Acetylation</keyword>
<keyword id="KW-0067">ATP-binding</keyword>
<keyword id="KW-1003">Cell membrane</keyword>
<keyword id="KW-0143">Chaperone</keyword>
<keyword id="KW-0963">Cytoplasm</keyword>
<keyword id="KW-0378">Hydrolase</keyword>
<keyword id="KW-1017">Isopeptide bond</keyword>
<keyword id="KW-0472">Membrane</keyword>
<keyword id="KW-0488">Methylation</keyword>
<keyword id="KW-0507">mRNA processing</keyword>
<keyword id="KW-0508">mRNA splicing</keyword>
<keyword id="KW-0547">Nucleotide-binding</keyword>
<keyword id="KW-0539">Nucleus</keyword>
<keyword id="KW-0597">Phosphoprotein</keyword>
<keyword id="KW-0678">Repressor</keyword>
<keyword id="KW-0747">Spliceosome</keyword>
<keyword id="KW-0346">Stress response</keyword>
<keyword id="KW-0804">Transcription</keyword>
<keyword id="KW-0805">Transcription regulation</keyword>
<keyword id="KW-0832">Ubl conjugation</keyword>
<comment type="function">
    <text evidence="2 3">Molecular chaperone implicated in a wide variety of cellular processes, including protection of the proteome from stress, folding and transport of newly synthesized polypeptides, chaperone-mediated autophagy, activation of proteolysis of misfolded proteins, formation and dissociation of protein complexes, and antigen presentation. Plays a pivotal role in the protein quality control system, ensuring the correct folding of proteins, the re-folding of misfolded proteins and controlling the targeting of proteins for subsequent degradation. This is achieved through cycles of ATP binding, ATP hydrolysis and ADP release, mediated by co-chaperones. The co-chaperones have been shown to not only regulate different steps of the ATPase cycle of HSP70, but they also have an individual specificity such that one co-chaperone may promote folding of a substrate while another may promote degradation. The affinity of HSP70 for polypeptides is regulated by its nucleotide bound state. In the ATP-bound form, it has a low affinity for substrate proteins. However, upon hydrolysis of the ATP to ADP, it undergoes a conformational change that increases its affinity for substrate proteins. HSP70 goes through repeated cycles of ATP hydrolysis and nucleotide exchange, which permits cycles of substrate binding and release. The HSP70-associated co-chaperones are of three types: J-domain co-chaperones HSP40s (stimulate ATPase hydrolysis by HSP70), the nucleotide exchange factors (NEF) such as BAG1/2/3 (facilitate conversion of HSP70 from the ADP-bound to the ATP-bound state thereby promoting substrate release), and the TPR domain chaperones such as HOPX and STUB1. Plays a critical role in mitochondrial import, delivers preproteins to the mitochondrial import receptor TOMM70. Acts as a repressor of transcriptional activation. Inhibits the transcriptional coactivator activity of CITED1 on Smad-mediated transcription. Component of the PRP19-CDC5L complex that forms an integral part of the spliceosome and is required for activating pre-mRNA splicing. May have a scaffolding role in the spliceosome assembly as it contacts all other components of the core complex. Binds bacterial lipopolysaccharide (LPS) and mediates LPS-induced inflammatory response, including TNF secretion by monocytes. Substrate recognition component in chaperone-mediated autophagy (CMA), a selective protein degradation process that mediates degradation of proteins with a -KFERQ motif: HSPA8/HSC70 specifically recognizes and binds cytosolic proteins bearing a -KFERQ motif and promotes their recruitment to the surface of the lysosome where they bind to lysosomal protein LAMP2. KFERQ motif-containing proteins are eventually transported into the lysosomal lumen where they are degraded. In conjunction with LAMP2, facilitates MHC class II presentation of cytoplasmic antigens by guiding antigens to the lysosomal membrane for interaction with LAMP2 which then elicits MHC class II presentation of peptides to the cell membrane. Participates in the ER-associated degradation (ERAD) quality control pathway in conjunction with J domain-containing co-chaperones and the E3 ligase STUB1. It is recruited to clathrin-coated vesicles through its interaction with DNAJC6 leading to activation of HSPA8/HSC70 ATPase activity and therefore uncoating of clathrin-coated vesicles (By similarity).</text>
</comment>
<comment type="catalytic activity">
    <reaction evidence="2">
        <text>ATP + H2O = ADP + phosphate + H(+)</text>
        <dbReference type="Rhea" id="RHEA:13065"/>
        <dbReference type="ChEBI" id="CHEBI:15377"/>
        <dbReference type="ChEBI" id="CHEBI:15378"/>
        <dbReference type="ChEBI" id="CHEBI:30616"/>
        <dbReference type="ChEBI" id="CHEBI:43474"/>
        <dbReference type="ChEBI" id="CHEBI:456216"/>
        <dbReference type="EC" id="3.6.4.10"/>
    </reaction>
</comment>
<comment type="subunit">
    <text evidence="2 3 4 5">Component of the chaperone-assisted selective autophagy (CASA) complex consisting of BAG3, HSPA8/HSC70, HSPB8 and STUB1/CHIP (By similarity). Identified in a IGF2BP1-dependent mRNP granule complex containing untranslated mRNAs (By similarity). Interacts with PACRG (By similarity). Interacts with HSPH1/HSP105 (By similarity). Interacts with IRAK1BP1 and BAG1 (By similarity). Interacts with DNAJC7 (By similarity). Interacts with DNAJB12 (via J domain) (By similarity). Interacts with DNAJB14 (via J domain) (By similarity). Interacts (via C-terminus) with the E3 ligase STUB1 forming a 210 kDa complex of one STUB1 and two HSPA8 molecules (By similarity). Interacts with CITED1 (via N-terminus); the interaction suppresses the association of CITED1 to p300/CBP and Smad-mediated transcription transactivation (By similarity). Component of the PRP19-CDC5L splicing complex composed of a core complex comprising a homotetramer of PRPF19, CDC5L, PLRG1 and BCAS2, and at least three less stably associated proteins CTNNBL1, CWC15 and HSPA8 (By similarity). Interacts with TRIM5 (By similarity). Part of a complex composed at least of ASH2L, EMSY, HCFC1, HSPA8, CCAR2, MATR3, MKI67, RBBP5, TUBB2A, WDR5 and ZNF335; this complex may have a histone H3-specific methyltransferase activity (By similarity). Interacts with METTL21A (By similarity). Following LPS binding, may form a complex with CXCR4, GDF5 and HSP90AA1 (By similarity). Interacts with PRKN (By similarity). Interacts with FOXP3 (By similarity). Interacts with DNAJC9 (via J domain) (By similarity). Interacts with MLLT11 (By similarity). Interacts with RNF207 (By similarity). Interacts with DNAJC21 (By similarity). Interacts with DNAJB2 (By similarity). Interacts with TTC1 (via TPR repeats) (By similarity). Interacts with SGTA (via TPR repeats) (By similarity). Interacts with HSF1 (via transactivation domain) (By similarity). Interacts with HOPX, STUB1, HSP40, HSP901, BAG2 and BAG3 (By similarity). Interacts with HSPC138 (By similarity). Interacts with ZMYND10 (By similarity). Interacts with VGF-derived peptide TLQP-21 (By similarity). Interacts with BCL2L1, GIMAP5 and MCL1; the interaction with BCL2L1 or MCL1 is impaired in the absence of GIMAP5 (By similarity). Interacts with NLPR12 (By similarity). Interacts with TTC4 (By similarity). Interacts with TOMM70; the interaction is required for preprotein mitochondrial import (By similarity). May interact with DNJC9; the interaction seems to be histone-dependent (By similarity). Interacts with BAG5 and JPH2; the interaction with JPH2 is increased in the presence of BAG5 (By similarity). Interacts with DNAJC6 (via J domain) in an ATP-dependent manner; this interaction stimulates the HSPA8's ATPase activity. Forms a complex composed of HSPA8, CLTC and DNAJC6 (By similarity). Interacts with HSPA8; this interaction modulates migratory and antigen-presenting capacities of dendritic cells (By similarity).</text>
</comment>
<comment type="subcellular location">
    <subcellularLocation>
        <location evidence="1">Cytoplasm</location>
    </subcellularLocation>
    <subcellularLocation>
        <location evidence="1">Melanosome</location>
    </subcellularLocation>
    <subcellularLocation>
        <location evidence="1">Cell membrane</location>
    </subcellularLocation>
    <subcellularLocation>
        <location>Nucleus</location>
        <location>Nucleolus</location>
    </subcellularLocation>
    <text evidence="1">Translocates rapidly from the cytoplasm to the nuclei, and especially to the nucleoli, upon heat shock.</text>
</comment>
<comment type="induction">
    <text>Constitutively synthesized.</text>
</comment>
<comment type="domain">
    <text evidence="2">The N-terminal nucleotide binding domain (NBD) (also known as the ATPase domain) is responsible for binding and hydrolyzing ATP. The C-terminal substrate-binding domain (SBD) (also known as peptide-binding domain) binds to the client/substrate proteins. The two domains are allosterically coupled so that, when ATP is bound to the NBD, the SBD binds relatively weakly to clients. When ADP is bound in the NBD, a conformational change enhances the affinity of the SBD for client proteins.</text>
</comment>
<comment type="PTM">
    <text evidence="2">Acetylated.</text>
</comment>
<comment type="PTM">
    <text evidence="2">ISGylated.</text>
</comment>
<comment type="PTM">
    <text evidence="2">Trimethylation at Lys-561 reduces fibrillar SNCA binding.</text>
</comment>
<comment type="similarity">
    <text evidence="7">Belongs to the heat shock protein 70 family.</text>
</comment>
<evidence type="ECO:0000250" key="1"/>
<evidence type="ECO:0000250" key="2">
    <source>
        <dbReference type="UniProtKB" id="P11142"/>
    </source>
</evidence>
<evidence type="ECO:0000250" key="3">
    <source>
        <dbReference type="UniProtKB" id="P19120"/>
    </source>
</evidence>
<evidence type="ECO:0000250" key="4">
    <source>
        <dbReference type="UniProtKB" id="P63017"/>
    </source>
</evidence>
<evidence type="ECO:0000250" key="5">
    <source>
        <dbReference type="UniProtKB" id="P63018"/>
    </source>
</evidence>
<evidence type="ECO:0000256" key="6">
    <source>
        <dbReference type="SAM" id="MobiDB-lite"/>
    </source>
</evidence>
<evidence type="ECO:0000305" key="7"/>
<dbReference type="EC" id="3.6.4.10" evidence="2"/>
<dbReference type="EMBL" id="AF142571">
    <property type="protein sequence ID" value="AAF66593.1"/>
    <property type="molecule type" value="mRNA"/>
</dbReference>
<dbReference type="SMR" id="Q71U34"/>
<dbReference type="GO" id="GO:0042470">
    <property type="term" value="C:melanosome"/>
    <property type="evidence" value="ECO:0007669"/>
    <property type="project" value="UniProtKB-SubCell"/>
</dbReference>
<dbReference type="GO" id="GO:0005730">
    <property type="term" value="C:nucleolus"/>
    <property type="evidence" value="ECO:0007669"/>
    <property type="project" value="UniProtKB-SubCell"/>
</dbReference>
<dbReference type="GO" id="GO:0005886">
    <property type="term" value="C:plasma membrane"/>
    <property type="evidence" value="ECO:0007669"/>
    <property type="project" value="UniProtKB-SubCell"/>
</dbReference>
<dbReference type="GO" id="GO:0005681">
    <property type="term" value="C:spliceosomal complex"/>
    <property type="evidence" value="ECO:0007669"/>
    <property type="project" value="UniProtKB-KW"/>
</dbReference>
<dbReference type="GO" id="GO:0005524">
    <property type="term" value="F:ATP binding"/>
    <property type="evidence" value="ECO:0007669"/>
    <property type="project" value="UniProtKB-KW"/>
</dbReference>
<dbReference type="GO" id="GO:0140662">
    <property type="term" value="F:ATP-dependent protein folding chaperone"/>
    <property type="evidence" value="ECO:0007669"/>
    <property type="project" value="InterPro"/>
</dbReference>
<dbReference type="GO" id="GO:0016787">
    <property type="term" value="F:hydrolase activity"/>
    <property type="evidence" value="ECO:0007669"/>
    <property type="project" value="UniProtKB-KW"/>
</dbReference>
<dbReference type="GO" id="GO:0072318">
    <property type="term" value="P:clathrin coat disassembly"/>
    <property type="evidence" value="ECO:0000314"/>
    <property type="project" value="UniProtKB"/>
</dbReference>
<dbReference type="GO" id="GO:0006397">
    <property type="term" value="P:mRNA processing"/>
    <property type="evidence" value="ECO:0007669"/>
    <property type="project" value="UniProtKB-KW"/>
</dbReference>
<dbReference type="GO" id="GO:0008380">
    <property type="term" value="P:RNA splicing"/>
    <property type="evidence" value="ECO:0007669"/>
    <property type="project" value="UniProtKB-KW"/>
</dbReference>
<dbReference type="CDD" id="cd10233">
    <property type="entry name" value="ASKHA_NBD_HSP70_HSPA1"/>
    <property type="match status" value="1"/>
</dbReference>
<dbReference type="FunFam" id="2.60.34.10:FF:000002">
    <property type="entry name" value="Heat shock 70 kDa"/>
    <property type="match status" value="1"/>
</dbReference>
<dbReference type="FunFam" id="3.30.420.40:FF:000172">
    <property type="entry name" value="Heat shock 70 kDa protein"/>
    <property type="match status" value="1"/>
</dbReference>
<dbReference type="FunFam" id="3.30.420.40:FF:000028">
    <property type="entry name" value="heat shock 70 kDa protein-like"/>
    <property type="match status" value="1"/>
</dbReference>
<dbReference type="FunFam" id="3.30.420.40:FF:000135">
    <property type="entry name" value="Heat shock cognate 71 kDa protein"/>
    <property type="match status" value="1"/>
</dbReference>
<dbReference type="FunFam" id="3.90.640.10:FF:000134">
    <property type="entry name" value="Heat shock cognate 71 kDa protein"/>
    <property type="match status" value="1"/>
</dbReference>
<dbReference type="FunFam" id="1.20.1270.10:FF:000003">
    <property type="entry name" value="heat shock cognate 71 kDa protein-like"/>
    <property type="match status" value="1"/>
</dbReference>
<dbReference type="FunFam" id="3.30.420.40:FF:000026">
    <property type="entry name" value="Heat shock protein 70"/>
    <property type="match status" value="1"/>
</dbReference>
<dbReference type="FunFam" id="3.30.30.30:FF:000025">
    <property type="entry name" value="Uncharacterized protein"/>
    <property type="match status" value="1"/>
</dbReference>
<dbReference type="Gene3D" id="1.20.1270.10">
    <property type="match status" value="1"/>
</dbReference>
<dbReference type="Gene3D" id="3.30.30.30">
    <property type="match status" value="1"/>
</dbReference>
<dbReference type="Gene3D" id="3.30.420.40">
    <property type="match status" value="2"/>
</dbReference>
<dbReference type="Gene3D" id="3.90.640.10">
    <property type="entry name" value="Actin, Chain A, domain 4"/>
    <property type="match status" value="1"/>
</dbReference>
<dbReference type="Gene3D" id="2.60.34.10">
    <property type="entry name" value="Substrate Binding Domain Of DNAk, Chain A, domain 1"/>
    <property type="match status" value="1"/>
</dbReference>
<dbReference type="InterPro" id="IPR043129">
    <property type="entry name" value="ATPase_NBD"/>
</dbReference>
<dbReference type="InterPro" id="IPR018181">
    <property type="entry name" value="Heat_shock_70_CS"/>
</dbReference>
<dbReference type="InterPro" id="IPR029048">
    <property type="entry name" value="HSP70_C_sf"/>
</dbReference>
<dbReference type="InterPro" id="IPR029047">
    <property type="entry name" value="HSP70_peptide-bd_sf"/>
</dbReference>
<dbReference type="InterPro" id="IPR013126">
    <property type="entry name" value="Hsp_70_fam"/>
</dbReference>
<dbReference type="NCBIfam" id="NF001413">
    <property type="entry name" value="PRK00290.1"/>
    <property type="match status" value="1"/>
</dbReference>
<dbReference type="PANTHER" id="PTHR19375">
    <property type="entry name" value="HEAT SHOCK PROTEIN 70KDA"/>
    <property type="match status" value="1"/>
</dbReference>
<dbReference type="Pfam" id="PF00012">
    <property type="entry name" value="HSP70"/>
    <property type="match status" value="1"/>
</dbReference>
<dbReference type="PRINTS" id="PR00301">
    <property type="entry name" value="HEATSHOCK70"/>
</dbReference>
<dbReference type="SUPFAM" id="SSF53067">
    <property type="entry name" value="Actin-like ATPase domain"/>
    <property type="match status" value="2"/>
</dbReference>
<dbReference type="SUPFAM" id="SSF100934">
    <property type="entry name" value="Heat shock protein 70kD (HSP70), C-terminal subdomain"/>
    <property type="match status" value="1"/>
</dbReference>
<dbReference type="SUPFAM" id="SSF100920">
    <property type="entry name" value="Heat shock protein 70kD (HSP70), peptide-binding domain"/>
    <property type="match status" value="1"/>
</dbReference>
<dbReference type="PROSITE" id="PS00297">
    <property type="entry name" value="HSP70_1"/>
    <property type="match status" value="1"/>
</dbReference>
<dbReference type="PROSITE" id="PS00329">
    <property type="entry name" value="HSP70_2"/>
    <property type="match status" value="1"/>
</dbReference>
<dbReference type="PROSITE" id="PS01036">
    <property type="entry name" value="HSP70_3"/>
    <property type="match status" value="1"/>
</dbReference>
<gene>
    <name evidence="2" type="primary">HSPA8</name>
    <name type="synonym">IDBP1</name>
</gene>
<name>HSP7C_SAGOE</name>
<proteinExistence type="evidence at transcript level"/>
<reference key="1">
    <citation type="submission" date="1999-04" db="EMBL/GenBank/DDBJ databases">
        <title>Cloning and expression of two novel cDNAs for hsp-70-related intracellular vitamin D binding proteins.</title>
        <authorList>
            <person name="Wu S."/>
            <person name="Ren S."/>
            <person name="Chen H."/>
            <person name="Chien R."/>
            <person name="Gacad M.A."/>
            <person name="Adams J.S."/>
        </authorList>
    </citation>
    <scope>NUCLEOTIDE SEQUENCE [MRNA]</scope>
</reference>
<feature type="initiator methionine" description="Removed" evidence="2">
    <location>
        <position position="1"/>
    </location>
</feature>
<feature type="chain" id="PRO_0000078275" description="Heat shock cognate 71 kDa protein">
    <location>
        <begin position="2"/>
        <end position="646"/>
    </location>
</feature>
<feature type="region of interest" description="Nucleotide-binding domain (NBD)" evidence="2">
    <location>
        <begin position="2"/>
        <end position="386"/>
    </location>
</feature>
<feature type="region of interest" description="Substrate-binding domain (SBD)" evidence="2">
    <location>
        <begin position="394"/>
        <end position="509"/>
    </location>
</feature>
<feature type="region of interest" description="Disordered" evidence="6">
    <location>
        <begin position="614"/>
        <end position="646"/>
    </location>
</feature>
<feature type="compositionally biased region" description="Gly residues" evidence="6">
    <location>
        <begin position="616"/>
        <end position="632"/>
    </location>
</feature>
<feature type="binding site" evidence="3">
    <location>
        <position position="14"/>
    </location>
    <ligand>
        <name>ADP</name>
        <dbReference type="ChEBI" id="CHEBI:456216"/>
    </ligand>
</feature>
<feature type="binding site" evidence="3">
    <location>
        <position position="15"/>
    </location>
    <ligand>
        <name>ADP</name>
        <dbReference type="ChEBI" id="CHEBI:456216"/>
    </ligand>
</feature>
<feature type="binding site" evidence="3">
    <location>
        <position position="202"/>
    </location>
    <ligand>
        <name>ADP</name>
        <dbReference type="ChEBI" id="CHEBI:456216"/>
    </ligand>
</feature>
<feature type="binding site" evidence="3">
    <location>
        <position position="268"/>
    </location>
    <ligand>
        <name>ADP</name>
        <dbReference type="ChEBI" id="CHEBI:456216"/>
    </ligand>
</feature>
<feature type="binding site" evidence="3">
    <location>
        <position position="271"/>
    </location>
    <ligand>
        <name>ADP</name>
        <dbReference type="ChEBI" id="CHEBI:456216"/>
    </ligand>
</feature>
<feature type="binding site" evidence="3">
    <location>
        <position position="275"/>
    </location>
    <ligand>
        <name>ADP</name>
        <dbReference type="ChEBI" id="CHEBI:456216"/>
    </ligand>
</feature>
<feature type="binding site" evidence="3">
    <location>
        <position position="339"/>
    </location>
    <ligand>
        <name>ADP</name>
        <dbReference type="ChEBI" id="CHEBI:456216"/>
    </ligand>
</feature>
<feature type="modified residue" description="N-acetylserine" evidence="2">
    <location>
        <position position="2"/>
    </location>
</feature>
<feature type="modified residue" description="N6-acetyllysine" evidence="4">
    <location>
        <position position="108"/>
    </location>
</feature>
<feature type="modified residue" description="Phosphoserine" evidence="2">
    <location>
        <position position="153"/>
    </location>
</feature>
<feature type="modified residue" description="N6-acetyllysine" evidence="2">
    <location>
        <position position="246"/>
    </location>
</feature>
<feature type="modified residue" description="N6-acetyllysine; alternate" evidence="2">
    <location>
        <position position="319"/>
    </location>
</feature>
<feature type="modified residue" description="N6-succinyllysine; alternate" evidence="4">
    <location>
        <position position="319"/>
    </location>
</feature>
<feature type="modified residue" description="N6-acetyllysine" evidence="4">
    <location>
        <position position="328"/>
    </location>
</feature>
<feature type="modified residue" description="Phosphoserine" evidence="2">
    <location>
        <position position="329"/>
    </location>
</feature>
<feature type="modified residue" description="Phosphoserine" evidence="2">
    <location>
        <position position="362"/>
    </location>
</feature>
<feature type="modified residue" description="Omega-N-methylarginine" evidence="2">
    <location>
        <position position="469"/>
    </location>
</feature>
<feature type="modified residue" description="N6-acetyllysine; alternate" evidence="4">
    <location>
        <position position="512"/>
    </location>
</feature>
<feature type="modified residue" description="N6-succinyllysine; alternate" evidence="4">
    <location>
        <position position="512"/>
    </location>
</feature>
<feature type="modified residue" description="N6-acetyllysine" evidence="4">
    <location>
        <position position="524"/>
    </location>
</feature>
<feature type="modified residue" description="Phosphoserine" evidence="2">
    <location>
        <position position="541"/>
    </location>
</feature>
<feature type="modified residue" description="N6,N6,N6-trimethyllysine; by METTL21A; in vitro" evidence="2">
    <location>
        <position position="561"/>
    </location>
</feature>
<feature type="modified residue" description="N6,N6-dimethyllysine" evidence="2">
    <location>
        <position position="561"/>
    </location>
</feature>
<feature type="modified residue" description="N6-acetyllysine" evidence="2">
    <location>
        <position position="589"/>
    </location>
</feature>
<feature type="modified residue" description="N6-acetyllysine" evidence="2">
    <location>
        <position position="597"/>
    </location>
</feature>
<feature type="modified residue" description="N6-acetyllysine" evidence="2">
    <location>
        <position position="601"/>
    </location>
</feature>
<feature type="cross-link" description="Glycyl lysine isopeptide (Lys-Gly) (interchain with G-Cter in SUMO1); alternate" evidence="2">
    <location>
        <position position="512"/>
    </location>
</feature>
<feature type="cross-link" description="Glycyl lysine isopeptide (Lys-Gly) (interchain with G-Cter in SUMO2); alternate" evidence="2">
    <location>
        <position position="512"/>
    </location>
</feature>
<sequence length="646" mass="70898">MSKGPAVGIDLGTTYSCVGVFQHGKVEIIANDQGNRTTPSYVAFTDTERLIGDAAKNQVAMNPTNTVFDAKRLIGRRFDDAVVQSDMKHWPFMVVNDAGRPKVQVEYKGETKSFYPEEVSSMVLTKMKEIAEAYLGKTVTNAVVTVPAYFNDSQRQATKDAGTIAGLNVLRIINEPTAAAIAYGLDKKVGAERNVLIFDLGGGTFDVSILTIEDGIFEVKSTAGDTHLGGEDFDNRMVNHFIAEFKRKHKKDISENKRAVRRLRTACERAKRTLSSSTQASIEIDSLYEGIDFYTSITRARFEELNADLFRGTLDPVEKALRDAKLDKSQIHDIVLVGGSTRIPKIQKLLQDFFNGKELNKSINPDEAVAYGAAVQAAILSGDKSENVQDLLLLDVTPLSLGIETAGGVMTVLIKRNTTIPTKQTQTFTTYSDNQPGVLIQVYEGERAMTKDNNLLGKFELTGIPPAPRGVPQIEVTFDIDANGILNVSAVDKSTGKENKITITNDKGRLSKEDIERMVQEAEKYKAEDEKQRDKVSSKNSLESYAFNMKATVEDEKLQGKINDEDKQKILDKCNEIINWLDKNQTAEKEEFEHQQKELEKVCNPIITKLYQSAGGMPGGMPGGFPGGGAPPSGGASSGPTIEEVD</sequence>